<reference key="1">
    <citation type="journal article" date="1997" name="Infect. Immun.">
        <title>Urease is not involved in the virulence of Yersinia pseudotuberculosis in mice.</title>
        <authorList>
            <person name="Riot B."/>
            <person name="Berche P."/>
            <person name="Simonet M."/>
        </authorList>
    </citation>
    <scope>NUCLEOTIDE SEQUENCE [GENOMIC DNA]</scope>
    <source>
        <strain>IP 2777</strain>
    </source>
</reference>
<reference key="2">
    <citation type="journal article" date="2004" name="Proc. Natl. Acad. Sci. U.S.A.">
        <title>Insights into the evolution of Yersinia pestis through whole-genome comparison with Yersinia pseudotuberculosis.</title>
        <authorList>
            <person name="Chain P.S.G."/>
            <person name="Carniel E."/>
            <person name="Larimer F.W."/>
            <person name="Lamerdin J."/>
            <person name="Stoutland P.O."/>
            <person name="Regala W.M."/>
            <person name="Georgescu A.M."/>
            <person name="Vergez L.M."/>
            <person name="Land M.L."/>
            <person name="Motin V.L."/>
            <person name="Brubaker R.R."/>
            <person name="Fowler J."/>
            <person name="Hinnebusch J."/>
            <person name="Marceau M."/>
            <person name="Medigue C."/>
            <person name="Simonet M."/>
            <person name="Chenal-Francisque V."/>
            <person name="Souza B."/>
            <person name="Dacheux D."/>
            <person name="Elliott J.M."/>
            <person name="Derbise A."/>
            <person name="Hauser L.J."/>
            <person name="Garcia E."/>
        </authorList>
    </citation>
    <scope>NUCLEOTIDE SEQUENCE [LARGE SCALE GENOMIC DNA]</scope>
    <source>
        <strain>IP32953</strain>
    </source>
</reference>
<protein>
    <recommendedName>
        <fullName evidence="1">Urease accessory protein UreG</fullName>
    </recommendedName>
</protein>
<proteinExistence type="inferred from homology"/>
<sequence>MTDKSTARKKITRIGIGGPVGSGKTAIIEVITPILIKRGIKPLIITNDIVTTEDAKQVKRTLKGILDEEKILGVETGACPHTAVREDPSMNIAAVEEMEERFPESDLIMIESGGDNLTLTFSPALADFYIYVIDVAEGEKIPRKNGPGLVQADILVINKIDLAPYVGASLDVMESDTKVVRGNRPYILTNCKTGQGIEELVDMIMRDFLFTHVQPEGEQA</sequence>
<dbReference type="EMBL" id="U40842">
    <property type="protein sequence ID" value="AAA87857.2"/>
    <property type="molecule type" value="Genomic_DNA"/>
</dbReference>
<dbReference type="EMBL" id="BX936398">
    <property type="protein sequence ID" value="CAH22177.1"/>
    <property type="molecule type" value="Genomic_DNA"/>
</dbReference>
<dbReference type="RefSeq" id="WP_002212232.1">
    <property type="nucleotide sequence ID" value="NZ_CP009712.1"/>
</dbReference>
<dbReference type="SMR" id="P69993"/>
<dbReference type="GeneID" id="96662301"/>
<dbReference type="KEGG" id="ypo:BZ17_3689"/>
<dbReference type="KEGG" id="yps:YPTB2939"/>
<dbReference type="PATRIC" id="fig|273123.14.peg.3867"/>
<dbReference type="Proteomes" id="UP000001011">
    <property type="component" value="Chromosome"/>
</dbReference>
<dbReference type="GO" id="GO:0005737">
    <property type="term" value="C:cytoplasm"/>
    <property type="evidence" value="ECO:0007669"/>
    <property type="project" value="UniProtKB-SubCell"/>
</dbReference>
<dbReference type="GO" id="GO:0005525">
    <property type="term" value="F:GTP binding"/>
    <property type="evidence" value="ECO:0007669"/>
    <property type="project" value="UniProtKB-KW"/>
</dbReference>
<dbReference type="GO" id="GO:0003924">
    <property type="term" value="F:GTPase activity"/>
    <property type="evidence" value="ECO:0007669"/>
    <property type="project" value="InterPro"/>
</dbReference>
<dbReference type="GO" id="GO:0016151">
    <property type="term" value="F:nickel cation binding"/>
    <property type="evidence" value="ECO:0007669"/>
    <property type="project" value="UniProtKB-UniRule"/>
</dbReference>
<dbReference type="GO" id="GO:0043419">
    <property type="term" value="P:urea catabolic process"/>
    <property type="evidence" value="ECO:0007669"/>
    <property type="project" value="InterPro"/>
</dbReference>
<dbReference type="Gene3D" id="3.40.50.300">
    <property type="entry name" value="P-loop containing nucleotide triphosphate hydrolases"/>
    <property type="match status" value="1"/>
</dbReference>
<dbReference type="HAMAP" id="MF_01389">
    <property type="entry name" value="UreG"/>
    <property type="match status" value="1"/>
</dbReference>
<dbReference type="InterPro" id="IPR003495">
    <property type="entry name" value="CobW/HypB/UreG_nucleotide-bd"/>
</dbReference>
<dbReference type="InterPro" id="IPR027417">
    <property type="entry name" value="P-loop_NTPase"/>
</dbReference>
<dbReference type="InterPro" id="IPR004400">
    <property type="entry name" value="UreG"/>
</dbReference>
<dbReference type="NCBIfam" id="TIGR00101">
    <property type="entry name" value="ureG"/>
    <property type="match status" value="1"/>
</dbReference>
<dbReference type="PANTHER" id="PTHR31715">
    <property type="entry name" value="UREASE ACCESSORY PROTEIN G"/>
    <property type="match status" value="1"/>
</dbReference>
<dbReference type="PANTHER" id="PTHR31715:SF0">
    <property type="entry name" value="UREASE ACCESSORY PROTEIN G"/>
    <property type="match status" value="1"/>
</dbReference>
<dbReference type="Pfam" id="PF02492">
    <property type="entry name" value="cobW"/>
    <property type="match status" value="1"/>
</dbReference>
<dbReference type="PIRSF" id="PIRSF005624">
    <property type="entry name" value="Ni-bind_GTPase"/>
    <property type="match status" value="1"/>
</dbReference>
<dbReference type="SUPFAM" id="SSF52540">
    <property type="entry name" value="P-loop containing nucleoside triphosphate hydrolases"/>
    <property type="match status" value="1"/>
</dbReference>
<name>UREG_YERPS</name>
<evidence type="ECO:0000255" key="1">
    <source>
        <dbReference type="HAMAP-Rule" id="MF_01389"/>
    </source>
</evidence>
<comment type="function">
    <text evidence="1">Facilitates the functional incorporation of the urease nickel metallocenter. This process requires GTP hydrolysis, probably effectuated by UreG.</text>
</comment>
<comment type="subunit">
    <text evidence="1">Homodimer. UreD, UreF and UreG form a complex that acts as a GTP-hydrolysis-dependent molecular chaperone, activating the urease apoprotein by helping to assemble the nickel containing metallocenter of UreC. The UreE protein probably delivers the nickel.</text>
</comment>
<comment type="subcellular location">
    <subcellularLocation>
        <location evidence="1">Cytoplasm</location>
    </subcellularLocation>
</comment>
<comment type="similarity">
    <text evidence="1">Belongs to the SIMIBI class G3E GTPase family. UreG subfamily.</text>
</comment>
<accession>P69993</accession>
<accession>P52319</accession>
<accession>Q667Q3</accession>
<accession>Q9ZFR6</accession>
<organism>
    <name type="scientific">Yersinia pseudotuberculosis serotype I (strain IP32953)</name>
    <dbReference type="NCBI Taxonomy" id="273123"/>
    <lineage>
        <taxon>Bacteria</taxon>
        <taxon>Pseudomonadati</taxon>
        <taxon>Pseudomonadota</taxon>
        <taxon>Gammaproteobacteria</taxon>
        <taxon>Enterobacterales</taxon>
        <taxon>Yersiniaceae</taxon>
        <taxon>Yersinia</taxon>
    </lineage>
</organism>
<feature type="chain" id="PRO_0000067678" description="Urease accessory protein UreG">
    <location>
        <begin position="1"/>
        <end position="220"/>
    </location>
</feature>
<feature type="binding site" evidence="1">
    <location>
        <begin position="18"/>
        <end position="25"/>
    </location>
    <ligand>
        <name>GTP</name>
        <dbReference type="ChEBI" id="CHEBI:37565"/>
    </ligand>
</feature>
<keyword id="KW-0143">Chaperone</keyword>
<keyword id="KW-0963">Cytoplasm</keyword>
<keyword id="KW-0342">GTP-binding</keyword>
<keyword id="KW-0996">Nickel insertion</keyword>
<keyword id="KW-0547">Nucleotide-binding</keyword>
<gene>
    <name evidence="1" type="primary">ureG</name>
    <name type="ordered locus">YPTB2939</name>
</gene>